<dbReference type="EC" id="6.3.2.4"/>
<dbReference type="EMBL" id="AE005174">
    <property type="protein sequence ID" value="AAG54396.1"/>
    <property type="molecule type" value="Genomic_DNA"/>
</dbReference>
<dbReference type="EMBL" id="BA000007">
    <property type="protein sequence ID" value="BAB33519.1"/>
    <property type="molecule type" value="Genomic_DNA"/>
</dbReference>
<dbReference type="PIR" id="H85491">
    <property type="entry name" value="H85491"/>
</dbReference>
<dbReference type="PIR" id="H90640">
    <property type="entry name" value="H90640"/>
</dbReference>
<dbReference type="RefSeq" id="NP_308123.1">
    <property type="nucleotide sequence ID" value="NC_002695.1"/>
</dbReference>
<dbReference type="RefSeq" id="WP_000130066.1">
    <property type="nucleotide sequence ID" value="NZ_VOAI01000002.1"/>
</dbReference>
<dbReference type="SMR" id="Q8X9Y6"/>
<dbReference type="STRING" id="155864.Z0102"/>
<dbReference type="GeneID" id="913558"/>
<dbReference type="KEGG" id="ece:Z0102"/>
<dbReference type="KEGG" id="ecs:ECs_0096"/>
<dbReference type="PATRIC" id="fig|386585.9.peg.196"/>
<dbReference type="eggNOG" id="COG1181">
    <property type="taxonomic scope" value="Bacteria"/>
</dbReference>
<dbReference type="HOGENOM" id="CLU_039268_1_2_6"/>
<dbReference type="OMA" id="TQYRIPC"/>
<dbReference type="UniPathway" id="UPA00219"/>
<dbReference type="Proteomes" id="UP000000558">
    <property type="component" value="Chromosome"/>
</dbReference>
<dbReference type="Proteomes" id="UP000002519">
    <property type="component" value="Chromosome"/>
</dbReference>
<dbReference type="GO" id="GO:0005829">
    <property type="term" value="C:cytosol"/>
    <property type="evidence" value="ECO:0007669"/>
    <property type="project" value="TreeGrafter"/>
</dbReference>
<dbReference type="GO" id="GO:0005524">
    <property type="term" value="F:ATP binding"/>
    <property type="evidence" value="ECO:0007669"/>
    <property type="project" value="UniProtKB-KW"/>
</dbReference>
<dbReference type="GO" id="GO:0008716">
    <property type="term" value="F:D-alanine-D-alanine ligase activity"/>
    <property type="evidence" value="ECO:0007669"/>
    <property type="project" value="UniProtKB-UniRule"/>
</dbReference>
<dbReference type="GO" id="GO:0046872">
    <property type="term" value="F:metal ion binding"/>
    <property type="evidence" value="ECO:0007669"/>
    <property type="project" value="UniProtKB-KW"/>
</dbReference>
<dbReference type="GO" id="GO:0071555">
    <property type="term" value="P:cell wall organization"/>
    <property type="evidence" value="ECO:0007669"/>
    <property type="project" value="UniProtKB-KW"/>
</dbReference>
<dbReference type="GO" id="GO:0009252">
    <property type="term" value="P:peptidoglycan biosynthetic process"/>
    <property type="evidence" value="ECO:0007669"/>
    <property type="project" value="UniProtKB-UniRule"/>
</dbReference>
<dbReference type="GO" id="GO:0008360">
    <property type="term" value="P:regulation of cell shape"/>
    <property type="evidence" value="ECO:0007669"/>
    <property type="project" value="UniProtKB-KW"/>
</dbReference>
<dbReference type="FunFam" id="3.30.1490.20:FF:000007">
    <property type="entry name" value="D-alanine--D-alanine ligase"/>
    <property type="match status" value="1"/>
</dbReference>
<dbReference type="FunFam" id="3.30.470.20:FF:000008">
    <property type="entry name" value="D-alanine--D-alanine ligase"/>
    <property type="match status" value="1"/>
</dbReference>
<dbReference type="FunFam" id="3.40.50.20:FF:000013">
    <property type="entry name" value="D-alanine--D-alanine ligase"/>
    <property type="match status" value="1"/>
</dbReference>
<dbReference type="Gene3D" id="3.40.50.20">
    <property type="match status" value="1"/>
</dbReference>
<dbReference type="Gene3D" id="3.30.1490.20">
    <property type="entry name" value="ATP-grasp fold, A domain"/>
    <property type="match status" value="1"/>
</dbReference>
<dbReference type="Gene3D" id="3.30.470.20">
    <property type="entry name" value="ATP-grasp fold, B domain"/>
    <property type="match status" value="1"/>
</dbReference>
<dbReference type="HAMAP" id="MF_00047">
    <property type="entry name" value="Dala_Dala_lig"/>
    <property type="match status" value="1"/>
</dbReference>
<dbReference type="InterPro" id="IPR011761">
    <property type="entry name" value="ATP-grasp"/>
</dbReference>
<dbReference type="InterPro" id="IPR013815">
    <property type="entry name" value="ATP_grasp_subdomain_1"/>
</dbReference>
<dbReference type="InterPro" id="IPR000291">
    <property type="entry name" value="D-Ala_lig_Van_CS"/>
</dbReference>
<dbReference type="InterPro" id="IPR005905">
    <property type="entry name" value="D_ala_D_ala"/>
</dbReference>
<dbReference type="InterPro" id="IPR011095">
    <property type="entry name" value="Dala_Dala_lig_C"/>
</dbReference>
<dbReference type="InterPro" id="IPR011127">
    <property type="entry name" value="Dala_Dala_lig_N"/>
</dbReference>
<dbReference type="InterPro" id="IPR016185">
    <property type="entry name" value="PreATP-grasp_dom_sf"/>
</dbReference>
<dbReference type="NCBIfam" id="TIGR01205">
    <property type="entry name" value="D_ala_D_alaTIGR"/>
    <property type="match status" value="1"/>
</dbReference>
<dbReference type="NCBIfam" id="NF002378">
    <property type="entry name" value="PRK01372.1"/>
    <property type="match status" value="1"/>
</dbReference>
<dbReference type="PANTHER" id="PTHR23132">
    <property type="entry name" value="D-ALANINE--D-ALANINE LIGASE"/>
    <property type="match status" value="1"/>
</dbReference>
<dbReference type="PANTHER" id="PTHR23132:SF23">
    <property type="entry name" value="D-ALANINE--D-ALANINE LIGASE B"/>
    <property type="match status" value="1"/>
</dbReference>
<dbReference type="Pfam" id="PF07478">
    <property type="entry name" value="Dala_Dala_lig_C"/>
    <property type="match status" value="1"/>
</dbReference>
<dbReference type="Pfam" id="PF01820">
    <property type="entry name" value="Dala_Dala_lig_N"/>
    <property type="match status" value="1"/>
</dbReference>
<dbReference type="PIRSF" id="PIRSF039102">
    <property type="entry name" value="Ddl/VanB"/>
    <property type="match status" value="1"/>
</dbReference>
<dbReference type="SUPFAM" id="SSF56059">
    <property type="entry name" value="Glutathione synthetase ATP-binding domain-like"/>
    <property type="match status" value="1"/>
</dbReference>
<dbReference type="SUPFAM" id="SSF52440">
    <property type="entry name" value="PreATP-grasp domain"/>
    <property type="match status" value="1"/>
</dbReference>
<dbReference type="PROSITE" id="PS50975">
    <property type="entry name" value="ATP_GRASP"/>
    <property type="match status" value="1"/>
</dbReference>
<dbReference type="PROSITE" id="PS00843">
    <property type="entry name" value="DALA_DALA_LIGASE_1"/>
    <property type="match status" value="1"/>
</dbReference>
<dbReference type="PROSITE" id="PS00844">
    <property type="entry name" value="DALA_DALA_LIGASE_2"/>
    <property type="match status" value="1"/>
</dbReference>
<organism>
    <name type="scientific">Escherichia coli O157:H7</name>
    <dbReference type="NCBI Taxonomy" id="83334"/>
    <lineage>
        <taxon>Bacteria</taxon>
        <taxon>Pseudomonadati</taxon>
        <taxon>Pseudomonadota</taxon>
        <taxon>Gammaproteobacteria</taxon>
        <taxon>Enterobacterales</taxon>
        <taxon>Enterobacteriaceae</taxon>
        <taxon>Escherichia</taxon>
    </lineage>
</organism>
<sequence>MTDKIAVLLGGTSAEREVSLNSGAAVLAGLREGGIDAYPVDPKEVDVTQLKSMGFQKVFIALHGRGGEDGTLQGMLELMGLPYTGSGVMASALSMDKLRSKLLWQGAGLPVAPWVALTRVEFEKGLSDKQLAEISALGLPVIVKPSREGSSVGMSKVVAENALQDALRLAFQHDEEVLIEKWLSGPEFTVAILGEEILPSVRIQPSGTFYDYEAKYLSDETQYFCPAGLEASQEANLQALVLKAWTTLGCKGWGRIDVMLDSDGQFYLLEANTSPGMTSHSLVPMAARQAGMSFSQLVVRILELAD</sequence>
<protein>
    <recommendedName>
        <fullName>D-alanine--D-alanine ligase B</fullName>
        <ecNumber>6.3.2.4</ecNumber>
    </recommendedName>
    <alternativeName>
        <fullName>D-Ala-D-Ala ligase B</fullName>
    </alternativeName>
    <alternativeName>
        <fullName>D-alanylalanine synthetase B</fullName>
    </alternativeName>
</protein>
<comment type="function">
    <text evidence="1">Cell wall formation.</text>
</comment>
<comment type="catalytic activity">
    <reaction>
        <text>2 D-alanine + ATP = D-alanyl-D-alanine + ADP + phosphate + H(+)</text>
        <dbReference type="Rhea" id="RHEA:11224"/>
        <dbReference type="ChEBI" id="CHEBI:15378"/>
        <dbReference type="ChEBI" id="CHEBI:30616"/>
        <dbReference type="ChEBI" id="CHEBI:43474"/>
        <dbReference type="ChEBI" id="CHEBI:57416"/>
        <dbReference type="ChEBI" id="CHEBI:57822"/>
        <dbReference type="ChEBI" id="CHEBI:456216"/>
        <dbReference type="EC" id="6.3.2.4"/>
    </reaction>
</comment>
<comment type="cofactor">
    <cofactor evidence="1">
        <name>Mg(2+)</name>
        <dbReference type="ChEBI" id="CHEBI:18420"/>
    </cofactor>
    <cofactor evidence="1">
        <name>Mn(2+)</name>
        <dbReference type="ChEBI" id="CHEBI:29035"/>
    </cofactor>
    <text evidence="1">Binds 2 magnesium or manganese ions per subunit.</text>
</comment>
<comment type="pathway">
    <text>Cell wall biogenesis; peptidoglycan biosynthesis.</text>
</comment>
<comment type="subunit">
    <text evidence="1">Monomer.</text>
</comment>
<comment type="subcellular location">
    <subcellularLocation>
        <location evidence="1">Cytoplasm</location>
    </subcellularLocation>
</comment>
<comment type="similarity">
    <text evidence="2">Belongs to the D-alanine--D-alanine ligase family.</text>
</comment>
<keyword id="KW-0067">ATP-binding</keyword>
<keyword id="KW-0133">Cell shape</keyword>
<keyword id="KW-0961">Cell wall biogenesis/degradation</keyword>
<keyword id="KW-0963">Cytoplasm</keyword>
<keyword id="KW-0436">Ligase</keyword>
<keyword id="KW-0460">Magnesium</keyword>
<keyword id="KW-0464">Manganese</keyword>
<keyword id="KW-0479">Metal-binding</keyword>
<keyword id="KW-0547">Nucleotide-binding</keyword>
<keyword id="KW-0573">Peptidoglycan synthesis</keyword>
<keyword id="KW-1185">Reference proteome</keyword>
<evidence type="ECO:0000250" key="1"/>
<evidence type="ECO:0000305" key="2"/>
<proteinExistence type="inferred from homology"/>
<accession>Q8X9Y6</accession>
<name>DDLB_ECO57</name>
<reference key="1">
    <citation type="journal article" date="2001" name="Nature">
        <title>Genome sequence of enterohaemorrhagic Escherichia coli O157:H7.</title>
        <authorList>
            <person name="Perna N.T."/>
            <person name="Plunkett G. III"/>
            <person name="Burland V."/>
            <person name="Mau B."/>
            <person name="Glasner J.D."/>
            <person name="Rose D.J."/>
            <person name="Mayhew G.F."/>
            <person name="Evans P.S."/>
            <person name="Gregor J."/>
            <person name="Kirkpatrick H.A."/>
            <person name="Posfai G."/>
            <person name="Hackett J."/>
            <person name="Klink S."/>
            <person name="Boutin A."/>
            <person name="Shao Y."/>
            <person name="Miller L."/>
            <person name="Grotbeck E.J."/>
            <person name="Davis N.W."/>
            <person name="Lim A."/>
            <person name="Dimalanta E.T."/>
            <person name="Potamousis K."/>
            <person name="Apodaca J."/>
            <person name="Anantharaman T.S."/>
            <person name="Lin J."/>
            <person name="Yen G."/>
            <person name="Schwartz D.C."/>
            <person name="Welch R.A."/>
            <person name="Blattner F.R."/>
        </authorList>
    </citation>
    <scope>NUCLEOTIDE SEQUENCE [LARGE SCALE GENOMIC DNA]</scope>
    <source>
        <strain>O157:H7 / EDL933 / ATCC 700927 / EHEC</strain>
    </source>
</reference>
<reference key="2">
    <citation type="journal article" date="2001" name="DNA Res.">
        <title>Complete genome sequence of enterohemorrhagic Escherichia coli O157:H7 and genomic comparison with a laboratory strain K-12.</title>
        <authorList>
            <person name="Hayashi T."/>
            <person name="Makino K."/>
            <person name="Ohnishi M."/>
            <person name="Kurokawa K."/>
            <person name="Ishii K."/>
            <person name="Yokoyama K."/>
            <person name="Han C.-G."/>
            <person name="Ohtsubo E."/>
            <person name="Nakayama K."/>
            <person name="Murata T."/>
            <person name="Tanaka M."/>
            <person name="Tobe T."/>
            <person name="Iida T."/>
            <person name="Takami H."/>
            <person name="Honda T."/>
            <person name="Sasakawa C."/>
            <person name="Ogasawara N."/>
            <person name="Yasunaga T."/>
            <person name="Kuhara S."/>
            <person name="Shiba T."/>
            <person name="Hattori M."/>
            <person name="Shinagawa H."/>
        </authorList>
    </citation>
    <scope>NUCLEOTIDE SEQUENCE [LARGE SCALE GENOMIC DNA]</scope>
    <source>
        <strain>O157:H7 / Sakai / RIMD 0509952 / EHEC</strain>
    </source>
</reference>
<gene>
    <name type="primary">ddlB</name>
    <name type="ordered locus">Z0102</name>
    <name type="ordered locus">ECs0096</name>
</gene>
<feature type="initiator methionine" description="Removed" evidence="1">
    <location>
        <position position="1"/>
    </location>
</feature>
<feature type="chain" id="PRO_0000177820" description="D-alanine--D-alanine ligase B">
    <location>
        <begin position="2"/>
        <end position="306"/>
    </location>
</feature>
<feature type="domain" description="ATP-grasp">
    <location>
        <begin position="101"/>
        <end position="303"/>
    </location>
</feature>
<feature type="active site" evidence="1">
    <location>
        <position position="15"/>
    </location>
</feature>
<feature type="active site" evidence="1">
    <location>
        <position position="150"/>
    </location>
</feature>
<feature type="active site" evidence="1">
    <location>
        <position position="281"/>
    </location>
</feature>
<feature type="binding site" evidence="1">
    <location>
        <begin position="134"/>
        <end position="189"/>
    </location>
    <ligand>
        <name>ATP</name>
        <dbReference type="ChEBI" id="CHEBI:30616"/>
    </ligand>
</feature>
<feature type="binding site" evidence="1">
    <location>
        <position position="257"/>
    </location>
    <ligand>
        <name>Mg(2+)</name>
        <dbReference type="ChEBI" id="CHEBI:18420"/>
        <label>1</label>
    </ligand>
</feature>
<feature type="binding site" evidence="1">
    <location>
        <position position="270"/>
    </location>
    <ligand>
        <name>Mg(2+)</name>
        <dbReference type="ChEBI" id="CHEBI:18420"/>
        <label>1</label>
    </ligand>
</feature>
<feature type="binding site" evidence="1">
    <location>
        <position position="270"/>
    </location>
    <ligand>
        <name>Mg(2+)</name>
        <dbReference type="ChEBI" id="CHEBI:18420"/>
        <label>2</label>
    </ligand>
</feature>
<feature type="binding site" evidence="1">
    <location>
        <position position="272"/>
    </location>
    <ligand>
        <name>Mg(2+)</name>
        <dbReference type="ChEBI" id="CHEBI:18420"/>
        <label>2</label>
    </ligand>
</feature>